<evidence type="ECO:0000250" key="1">
    <source>
        <dbReference type="UniProtKB" id="O31616"/>
    </source>
</evidence>
<evidence type="ECO:0000269" key="2">
    <source>
    </source>
</evidence>
<evidence type="ECO:0000303" key="3">
    <source>
    </source>
</evidence>
<evidence type="ECO:0000305" key="4"/>
<evidence type="ECO:0000305" key="5">
    <source>
    </source>
</evidence>
<evidence type="ECO:0000312" key="6">
    <source>
        <dbReference type="EMBL" id="AAN66238.1"/>
    </source>
</evidence>
<keyword id="KW-0274">FAD</keyword>
<keyword id="KW-0285">Flavoprotein</keyword>
<keyword id="KW-0560">Oxidoreductase</keyword>
<keyword id="KW-1185">Reference proteome</keyword>
<keyword id="KW-0784">Thiamine biosynthesis</keyword>
<organism>
    <name type="scientific">Pseudomonas putida (strain ATCC 47054 / DSM 6125 / CFBP 8728 / NCIMB 11950 / KT2440)</name>
    <dbReference type="NCBI Taxonomy" id="160488"/>
    <lineage>
        <taxon>Bacteria</taxon>
        <taxon>Pseudomonadati</taxon>
        <taxon>Pseudomonadota</taxon>
        <taxon>Gammaproteobacteria</taxon>
        <taxon>Pseudomonadales</taxon>
        <taxon>Pseudomonadaceae</taxon>
        <taxon>Pseudomonas</taxon>
    </lineage>
</organism>
<sequence>MSKQVVVVGGGVIGLLTAFNLAAKVGQVVVCDQGEVGRESSWAGGGIVSPLYPWRYSPAVTALAHWSQDFYPQLGERLFASTGVDPEVHTTGLYWLDLDDEAEALAWAAREQRPLSAVDISAAYDAVPVLGPGFKHAIYMAGVANVRNPRLVKSLKAALLALPNVSLREHCQITGFVQEKGRVTGVQTADGVLAADEVVLSAGAWSGDLLRTLGLELPVEPVKGQMILFKCAEDFLPSMVLAKGRYAIPRRDGHILVGSTLEHAGYDKTPTADALESLKASAVELLPELEGATVVAHWAGLRPGSPEGIPYIGPVPGHEGLWLNCGHYRNGLVLAPASCQLFTDLLTGAEPIIDPAPYAPEGRLG</sequence>
<accession>Q88Q83</accession>
<proteinExistence type="evidence at protein level"/>
<gene>
    <name evidence="3 6" type="primary">thiO</name>
    <name evidence="6" type="ordered locus">PP_0612</name>
</gene>
<feature type="chain" id="PRO_0000439958" description="Glycine oxidase">
    <location>
        <begin position="1"/>
        <end position="365"/>
    </location>
</feature>
<feature type="binding site" evidence="1">
    <location>
        <begin position="12"/>
        <end position="13"/>
    </location>
    <ligand>
        <name>FAD</name>
        <dbReference type="ChEBI" id="CHEBI:57692"/>
    </ligand>
</feature>
<feature type="binding site" evidence="1">
    <location>
        <begin position="32"/>
        <end position="33"/>
    </location>
    <ligand>
        <name>FAD</name>
        <dbReference type="ChEBI" id="CHEBI:57692"/>
    </ligand>
</feature>
<feature type="binding site" evidence="1">
    <location>
        <begin position="40"/>
        <end position="41"/>
    </location>
    <ligand>
        <name>FAD</name>
        <dbReference type="ChEBI" id="CHEBI:57692"/>
    </ligand>
</feature>
<feature type="binding site" evidence="1">
    <location>
        <begin position="45"/>
        <end position="47"/>
    </location>
    <ligand>
        <name>FAD</name>
        <dbReference type="ChEBI" id="CHEBI:57692"/>
    </ligand>
</feature>
<feature type="binding site" evidence="1">
    <location>
        <position position="173"/>
    </location>
    <ligand>
        <name>FAD</name>
        <dbReference type="ChEBI" id="CHEBI:57692"/>
    </ligand>
</feature>
<feature type="binding site" evidence="1">
    <location>
        <position position="302"/>
    </location>
    <ligand>
        <name>substrate</name>
    </ligand>
</feature>
<feature type="binding site" evidence="1">
    <location>
        <begin position="327"/>
        <end position="333"/>
    </location>
    <ligand>
        <name>FAD</name>
        <dbReference type="ChEBI" id="CHEBI:57692"/>
    </ligand>
</feature>
<name>GLYOX_PSEPK</name>
<protein>
    <recommendedName>
        <fullName evidence="3">Glycine oxidase</fullName>
        <shortName evidence="3">GO</shortName>
        <ecNumber evidence="2">1.4.3.19</ecNumber>
    </recommendedName>
</protein>
<comment type="function">
    <text evidence="2">Catalyzes the oxidation of glycine, leading to glyoxyl imine and hydrogen peroxide as primary products; glyoxyl imine is used for the biosynthesis of the thiazole ring of thiamine. Otherwise, glyoxyl imine is spontaneously hydrolyzed in water to produce glyoxylate and ammonia. Can also use sarcosine (N-methylglycine) as substrate, and, to a lesser extent, N-ethylglycine and D-proline. Has no activity towards other amino-acids D-Asp, D-Glu, D-Gln, D-His, D-Leu, D-Lys, D-ornithine, D-Trp, D-Val, L-Ala, L-Asp, L-Glu, L-His, L-Leu, L-Lys, L-Met and L-Pro.</text>
</comment>
<comment type="catalytic activity">
    <reaction evidence="2">
        <text>glycine + O2 + H2O = glyoxylate + H2O2 + NH4(+)</text>
        <dbReference type="Rhea" id="RHEA:11532"/>
        <dbReference type="ChEBI" id="CHEBI:15377"/>
        <dbReference type="ChEBI" id="CHEBI:15379"/>
        <dbReference type="ChEBI" id="CHEBI:16240"/>
        <dbReference type="ChEBI" id="CHEBI:28938"/>
        <dbReference type="ChEBI" id="CHEBI:36655"/>
        <dbReference type="ChEBI" id="CHEBI:57305"/>
        <dbReference type="EC" id="1.4.3.19"/>
    </reaction>
</comment>
<comment type="catalytic activity">
    <reaction evidence="2">
        <text>sarcosine + O2 + H2O = methylamine + glyoxylate + H2O2</text>
        <dbReference type="Rhea" id="RHEA:15165"/>
        <dbReference type="ChEBI" id="CHEBI:15377"/>
        <dbReference type="ChEBI" id="CHEBI:15379"/>
        <dbReference type="ChEBI" id="CHEBI:16240"/>
        <dbReference type="ChEBI" id="CHEBI:36655"/>
        <dbReference type="ChEBI" id="CHEBI:57433"/>
        <dbReference type="ChEBI" id="CHEBI:59338"/>
        <dbReference type="EC" id="1.4.3.19"/>
    </reaction>
</comment>
<comment type="cofactor">
    <cofactor evidence="2">
        <name>FAD</name>
        <dbReference type="ChEBI" id="CHEBI:57692"/>
    </cofactor>
</comment>
<comment type="biophysicochemical properties">
    <kinetics>
        <KM evidence="2">2.43 mM for glycine</KM>
        <KM evidence="2">4.86 mM for sarcosine</KM>
        <KM evidence="2">31.7 mM for D-proline</KM>
        <KM evidence="2">7.68 mM for N-ethylglycine</KM>
        <Vmax evidence="2">0.15 umol/min/mg enzyme with glycine as substrate</Vmax>
        <Vmax evidence="2">0.17 umol/min/mg enzyme with sarcosine as substrate</Vmax>
        <Vmax evidence="2">0.13 umol/min/mg enzyme with D-proline as substrate</Vmax>
        <Vmax evidence="2">0.11 umol/min/mg enzyme with N-ethylglycine as substrate</Vmax>
    </kinetics>
    <phDependence>
        <text evidence="2">Optimum pH is 8.5.</text>
    </phDependence>
    <temperatureDependence>
        <text evidence="2">Optimum temperature is 40 degrees Celsius.</text>
    </temperatureDependence>
</comment>
<comment type="pathway">
    <text evidence="5">Cofactor biosynthesis; thiamine diphosphate biosynthesis.</text>
</comment>
<comment type="subunit">
    <text evidence="2">Monomer.</text>
</comment>
<comment type="similarity">
    <text evidence="4">Belongs to the DAO family. ThiO subfamily.</text>
</comment>
<dbReference type="EC" id="1.4.3.19" evidence="2"/>
<dbReference type="EMBL" id="AE015451">
    <property type="protein sequence ID" value="AAN66238.1"/>
    <property type="molecule type" value="Genomic_DNA"/>
</dbReference>
<dbReference type="RefSeq" id="NP_742774.1">
    <property type="nucleotide sequence ID" value="NC_002947.4"/>
</dbReference>
<dbReference type="RefSeq" id="WP_010951878.1">
    <property type="nucleotide sequence ID" value="NZ_CP169744.1"/>
</dbReference>
<dbReference type="SMR" id="Q88Q83"/>
<dbReference type="STRING" id="160488.PP_0612"/>
<dbReference type="PaxDb" id="160488-PP_0612"/>
<dbReference type="GeneID" id="83677943"/>
<dbReference type="KEGG" id="ppu:PP_0612"/>
<dbReference type="PATRIC" id="fig|160488.4.peg.652"/>
<dbReference type="eggNOG" id="COG0665">
    <property type="taxonomic scope" value="Bacteria"/>
</dbReference>
<dbReference type="HOGENOM" id="CLU_007884_4_5_6"/>
<dbReference type="OrthoDB" id="18526at2"/>
<dbReference type="PhylomeDB" id="Q88Q83"/>
<dbReference type="BioCyc" id="PPUT160488:G1G01-669-MONOMER"/>
<dbReference type="BRENDA" id="1.4.3.19">
    <property type="organism ID" value="5092"/>
</dbReference>
<dbReference type="UniPathway" id="UPA00060"/>
<dbReference type="Proteomes" id="UP000000556">
    <property type="component" value="Chromosome"/>
</dbReference>
<dbReference type="GO" id="GO:0005737">
    <property type="term" value="C:cytoplasm"/>
    <property type="evidence" value="ECO:0007669"/>
    <property type="project" value="TreeGrafter"/>
</dbReference>
<dbReference type="GO" id="GO:0071949">
    <property type="term" value="F:FAD binding"/>
    <property type="evidence" value="ECO:0000314"/>
    <property type="project" value="UniProtKB"/>
</dbReference>
<dbReference type="GO" id="GO:0043799">
    <property type="term" value="F:glycine oxidase activity"/>
    <property type="evidence" value="ECO:0000314"/>
    <property type="project" value="UniProtKB"/>
</dbReference>
<dbReference type="GO" id="GO:0006520">
    <property type="term" value="P:amino acid metabolic process"/>
    <property type="evidence" value="ECO:0000314"/>
    <property type="project" value="UniProtKB"/>
</dbReference>
<dbReference type="GO" id="GO:0009228">
    <property type="term" value="P:thiamine biosynthetic process"/>
    <property type="evidence" value="ECO:0000303"/>
    <property type="project" value="UniProtKB"/>
</dbReference>
<dbReference type="GO" id="GO:0009229">
    <property type="term" value="P:thiamine diphosphate biosynthetic process"/>
    <property type="evidence" value="ECO:0007669"/>
    <property type="project" value="UniProtKB-UniPathway"/>
</dbReference>
<dbReference type="Gene3D" id="3.30.9.10">
    <property type="entry name" value="D-Amino Acid Oxidase, subunit A, domain 2"/>
    <property type="match status" value="1"/>
</dbReference>
<dbReference type="Gene3D" id="3.50.50.60">
    <property type="entry name" value="FAD/NAD(P)-binding domain"/>
    <property type="match status" value="1"/>
</dbReference>
<dbReference type="InterPro" id="IPR006076">
    <property type="entry name" value="FAD-dep_OxRdtase"/>
</dbReference>
<dbReference type="InterPro" id="IPR036188">
    <property type="entry name" value="FAD/NAD-bd_sf"/>
</dbReference>
<dbReference type="InterPro" id="IPR012727">
    <property type="entry name" value="Gly_oxidase_ThiO"/>
</dbReference>
<dbReference type="NCBIfam" id="TIGR02352">
    <property type="entry name" value="thiamin_ThiO"/>
    <property type="match status" value="1"/>
</dbReference>
<dbReference type="PANTHER" id="PTHR13847:SF289">
    <property type="entry name" value="GLYCINE OXIDASE"/>
    <property type="match status" value="1"/>
</dbReference>
<dbReference type="PANTHER" id="PTHR13847">
    <property type="entry name" value="SARCOSINE DEHYDROGENASE-RELATED"/>
    <property type="match status" value="1"/>
</dbReference>
<dbReference type="Pfam" id="PF01266">
    <property type="entry name" value="DAO"/>
    <property type="match status" value="1"/>
</dbReference>
<dbReference type="SUPFAM" id="SSF54373">
    <property type="entry name" value="FAD-linked reductases, C-terminal domain"/>
    <property type="match status" value="1"/>
</dbReference>
<dbReference type="SUPFAM" id="SSF51905">
    <property type="entry name" value="FAD/NAD(P)-binding domain"/>
    <property type="match status" value="1"/>
</dbReference>
<reference key="1">
    <citation type="journal article" date="2002" name="Environ. Microbiol.">
        <title>Complete genome sequence and comparative analysis of the metabolically versatile Pseudomonas putida KT2440.</title>
        <authorList>
            <person name="Nelson K.E."/>
            <person name="Weinel C."/>
            <person name="Paulsen I.T."/>
            <person name="Dodson R.J."/>
            <person name="Hilbert H."/>
            <person name="Martins dos Santos V.A.P."/>
            <person name="Fouts D.E."/>
            <person name="Gill S.R."/>
            <person name="Pop M."/>
            <person name="Holmes M."/>
            <person name="Brinkac L.M."/>
            <person name="Beanan M.J."/>
            <person name="DeBoy R.T."/>
            <person name="Daugherty S.C."/>
            <person name="Kolonay J.F."/>
            <person name="Madupu R."/>
            <person name="Nelson W.C."/>
            <person name="White O."/>
            <person name="Peterson J.D."/>
            <person name="Khouri H.M."/>
            <person name="Hance I."/>
            <person name="Chris Lee P."/>
            <person name="Holtzapple E.K."/>
            <person name="Scanlan D."/>
            <person name="Tran K."/>
            <person name="Moazzez A."/>
            <person name="Utterback T.R."/>
            <person name="Rizzo M."/>
            <person name="Lee K."/>
            <person name="Kosack D."/>
            <person name="Moestl D."/>
            <person name="Wedler H."/>
            <person name="Lauber J."/>
            <person name="Stjepandic D."/>
            <person name="Hoheisel J."/>
            <person name="Straetz M."/>
            <person name="Heim S."/>
            <person name="Kiewitz C."/>
            <person name="Eisen J.A."/>
            <person name="Timmis K.N."/>
            <person name="Duesterhoeft A."/>
            <person name="Tuemmler B."/>
            <person name="Fraser C.M."/>
        </authorList>
    </citation>
    <scope>NUCLEOTIDE SEQUENCE [LARGE SCALE GENOMIC DNA]</scope>
    <source>
        <strain>ATCC 47054 / DSM 6125 / CFBP 8728 / NCIMB 11950 / KT2440</strain>
    </source>
</reference>
<reference key="2">
    <citation type="journal article" date="2015" name="J. Nutr. Sci. Vitaminol.">
        <title>Purification and properties of glycine oxidase from Pseudomonas putida KT2440.</title>
        <authorList>
            <person name="Equar M.Y."/>
            <person name="Tani Y."/>
            <person name="Mihara H."/>
        </authorList>
    </citation>
    <scope>FUNCTION</scope>
    <scope>CATALYTIC ACTIVITY</scope>
    <scope>SUBSTRATE SPECIFICITY</scope>
    <scope>BIOPHYSICOCHEMICAL PROPERTIES</scope>
    <scope>COFACTOR</scope>
    <scope>SUBUNIT</scope>
    <scope>PATHWAY</scope>
    <source>
        <strain>ATCC 47054 / DSM 6125 / CFBP 8728 / NCIMB 11950 / KT2440</strain>
    </source>
</reference>